<evidence type="ECO:0000250" key="1">
    <source>
        <dbReference type="UniProtKB" id="P30230"/>
    </source>
</evidence>
<evidence type="ECO:0000305" key="2"/>
<accession>P30228</accession>
<proteinExistence type="evidence at protein level"/>
<protein>
    <recommendedName>
        <fullName>Defensin-like protein 2</fullName>
    </recommendedName>
    <alternativeName>
        <fullName>Cysteine-rich antifungal protein 2</fullName>
        <shortName>AFP2</shortName>
    </alternativeName>
</protein>
<sequence length="27" mass="2892">QKLCERPSGTXSGVCGNNNACKNQCIR</sequence>
<keyword id="KW-0044">Antibiotic</keyword>
<keyword id="KW-0929">Antimicrobial</keyword>
<keyword id="KW-0903">Direct protein sequencing</keyword>
<keyword id="KW-0295">Fungicide</keyword>
<keyword id="KW-0611">Plant defense</keyword>
<keyword id="KW-0873">Pyrrolidone carboxylic acid</keyword>
<keyword id="KW-1185">Reference proteome</keyword>
<organism>
    <name type="scientific">Brassica campestris</name>
    <name type="common">Field mustard</name>
    <dbReference type="NCBI Taxonomy" id="3711"/>
    <lineage>
        <taxon>Eukaryota</taxon>
        <taxon>Viridiplantae</taxon>
        <taxon>Streptophyta</taxon>
        <taxon>Embryophyta</taxon>
        <taxon>Tracheophyta</taxon>
        <taxon>Spermatophyta</taxon>
        <taxon>Magnoliopsida</taxon>
        <taxon>eudicotyledons</taxon>
        <taxon>Gunneridae</taxon>
        <taxon>Pentapetalae</taxon>
        <taxon>rosids</taxon>
        <taxon>malvids</taxon>
        <taxon>Brassicales</taxon>
        <taxon>Brassicaceae</taxon>
        <taxon>Brassiceae</taxon>
        <taxon>Brassica</taxon>
    </lineage>
</organism>
<dbReference type="PIR" id="S28990">
    <property type="entry name" value="S28990"/>
</dbReference>
<dbReference type="Proteomes" id="UP000011750">
    <property type="component" value="Unplaced"/>
</dbReference>
<dbReference type="GO" id="GO:0042742">
    <property type="term" value="P:defense response to bacterium"/>
    <property type="evidence" value="ECO:0007669"/>
    <property type="project" value="UniProtKB-KW"/>
</dbReference>
<dbReference type="GO" id="GO:0050832">
    <property type="term" value="P:defense response to fungus"/>
    <property type="evidence" value="ECO:0007669"/>
    <property type="project" value="UniProtKB-KW"/>
</dbReference>
<dbReference type="GO" id="GO:0031640">
    <property type="term" value="P:killing of cells of another organism"/>
    <property type="evidence" value="ECO:0007669"/>
    <property type="project" value="UniProtKB-KW"/>
</dbReference>
<dbReference type="Gene3D" id="3.30.30.10">
    <property type="entry name" value="Knottin, scorpion toxin-like"/>
    <property type="match status" value="1"/>
</dbReference>
<dbReference type="InterPro" id="IPR036574">
    <property type="entry name" value="Scorpion_toxin-like_sf"/>
</dbReference>
<dbReference type="Pfam" id="PF00304">
    <property type="entry name" value="Gamma-thionin"/>
    <property type="match status" value="1"/>
</dbReference>
<dbReference type="SUPFAM" id="SSF57095">
    <property type="entry name" value="Scorpion toxin-like"/>
    <property type="match status" value="1"/>
</dbReference>
<dbReference type="PROSITE" id="PS00940">
    <property type="entry name" value="GAMMA_THIONIN"/>
    <property type="match status" value="1"/>
</dbReference>
<name>DEF2_BRACM</name>
<reference key="1">
    <citation type="journal article" date="1993" name="FEBS Lett.">
        <title>A new family of basic cysteine-rich plant antifungal proteins from Brassicaceae species.</title>
        <authorList>
            <person name="Terras F.R.G."/>
            <person name="Torrekens S."/>
            <person name="van Leuven F."/>
            <person name="Osborn R.W."/>
            <person name="Vanderleyden J."/>
            <person name="Cammue B.P.A."/>
            <person name="Broekaert W.F."/>
        </authorList>
    </citation>
    <scope>PROTEIN SEQUENCE</scope>
    <source>
        <tissue>Seed</tissue>
    </source>
</reference>
<feature type="chain" id="PRO_0000074238" description="Defensin-like protein 2">
    <location>
        <begin position="1"/>
        <end position="27" status="greater than"/>
    </location>
</feature>
<feature type="modified residue" description="Pyrrolidone carboxylic acid" evidence="1">
    <location>
        <position position="1"/>
    </location>
</feature>
<feature type="unsure residue">
    <location>
        <position position="27"/>
    </location>
</feature>
<feature type="non-terminal residue">
    <location>
        <position position="27"/>
    </location>
</feature>
<comment type="function">
    <text>Possesses some antifungal activity sensitive to inorganic cations and antibacterial activity against B.megaterium.</text>
</comment>
<comment type="subunit">
    <text>Forms oligomers in its native state.</text>
</comment>
<comment type="similarity">
    <text evidence="2">Belongs to the DEFL family.</text>
</comment>